<name>Y153_PICP2</name>
<keyword id="KW-1185">Reference proteome</keyword>
<sequence>MYSLDLTLKYSPIPVSVQRKEADAAQALYQSVLEAMKGDYATLLELTCEKDEDKKIALLSDQISAVVLNKKSGAAAGGRVPGFFATQAAE</sequence>
<organism>
    <name type="scientific">Picosynechococcus sp. (strain ATCC 27264 / PCC 7002 / PR-6)</name>
    <name type="common">Agmenellum quadruplicatum</name>
    <dbReference type="NCBI Taxonomy" id="32049"/>
    <lineage>
        <taxon>Bacteria</taxon>
        <taxon>Bacillati</taxon>
        <taxon>Cyanobacteriota</taxon>
        <taxon>Cyanophyceae</taxon>
        <taxon>Oscillatoriophycideae</taxon>
        <taxon>Chroococcales</taxon>
        <taxon>Geminocystaceae</taxon>
        <taxon>Picosynechococcus</taxon>
    </lineage>
</organism>
<accession>B1XM20</accession>
<gene>
    <name type="ordered locus">SYNPCC7002_A0153</name>
</gene>
<evidence type="ECO:0000255" key="1">
    <source>
        <dbReference type="HAMAP-Rule" id="MF_01360"/>
    </source>
</evidence>
<comment type="similarity">
    <text evidence="1">Belongs to the UPF0367 family.</text>
</comment>
<protein>
    <recommendedName>
        <fullName evidence="1">UPF0367 protein SYNPCC7002_A0153</fullName>
    </recommendedName>
</protein>
<dbReference type="EMBL" id="CP000951">
    <property type="protein sequence ID" value="ACA98167.1"/>
    <property type="molecule type" value="Genomic_DNA"/>
</dbReference>
<dbReference type="RefSeq" id="WP_012305791.1">
    <property type="nucleotide sequence ID" value="NZ_JAHHPU010000005.1"/>
</dbReference>
<dbReference type="STRING" id="32049.SYNPCC7002_A0153"/>
<dbReference type="KEGG" id="syp:SYNPCC7002_A0153"/>
<dbReference type="eggNOG" id="ENOG5032YB3">
    <property type="taxonomic scope" value="Bacteria"/>
</dbReference>
<dbReference type="HOGENOM" id="CLU_180777_0_0_3"/>
<dbReference type="Proteomes" id="UP000001688">
    <property type="component" value="Chromosome"/>
</dbReference>
<dbReference type="HAMAP" id="MF_01360">
    <property type="entry name" value="UPF0367"/>
    <property type="match status" value="1"/>
</dbReference>
<dbReference type="InterPro" id="IPR020885">
    <property type="entry name" value="UPF0367"/>
</dbReference>
<dbReference type="NCBIfam" id="NF010236">
    <property type="entry name" value="PRK13683.1"/>
    <property type="match status" value="1"/>
</dbReference>
<proteinExistence type="inferred from homology"/>
<reference key="1">
    <citation type="submission" date="2008-02" db="EMBL/GenBank/DDBJ databases">
        <title>Complete sequence of Synechococcus sp. PCC 7002.</title>
        <authorList>
            <person name="Li T."/>
            <person name="Zhao J."/>
            <person name="Zhao C."/>
            <person name="Liu Z."/>
            <person name="Zhao F."/>
            <person name="Marquardt J."/>
            <person name="Nomura C.T."/>
            <person name="Persson S."/>
            <person name="Detter J.C."/>
            <person name="Richardson P.M."/>
            <person name="Lanz C."/>
            <person name="Schuster S.C."/>
            <person name="Wang J."/>
            <person name="Li S."/>
            <person name="Huang X."/>
            <person name="Cai T."/>
            <person name="Yu Z."/>
            <person name="Luo J."/>
            <person name="Zhao J."/>
            <person name="Bryant D.A."/>
        </authorList>
    </citation>
    <scope>NUCLEOTIDE SEQUENCE [LARGE SCALE GENOMIC DNA]</scope>
    <source>
        <strain>ATCC 27264 / PCC 7002 / PR-6</strain>
    </source>
</reference>
<feature type="chain" id="PRO_1000143697" description="UPF0367 protein SYNPCC7002_A0153">
    <location>
        <begin position="1"/>
        <end position="90"/>
    </location>
</feature>